<proteinExistence type="inferred from homology"/>
<name>UREG_RHOJR</name>
<comment type="function">
    <text evidence="1">Facilitates the functional incorporation of the urease nickel metallocenter. This process requires GTP hydrolysis, probably effectuated by UreG.</text>
</comment>
<comment type="subunit">
    <text evidence="1">Homodimer. UreD, UreF and UreG form a complex that acts as a GTP-hydrolysis-dependent molecular chaperone, activating the urease apoprotein by helping to assemble the nickel containing metallocenter of UreC. The UreE protein probably delivers the nickel.</text>
</comment>
<comment type="subcellular location">
    <subcellularLocation>
        <location evidence="1">Cytoplasm</location>
    </subcellularLocation>
</comment>
<comment type="similarity">
    <text evidence="1">Belongs to the SIMIBI class G3E GTPase family. UreG subfamily.</text>
</comment>
<protein>
    <recommendedName>
        <fullName evidence="1">Urease accessory protein UreG</fullName>
    </recommendedName>
</protein>
<keyword id="KW-0143">Chaperone</keyword>
<keyword id="KW-0963">Cytoplasm</keyword>
<keyword id="KW-0342">GTP-binding</keyword>
<keyword id="KW-0996">Nickel insertion</keyword>
<keyword id="KW-0547">Nucleotide-binding</keyword>
<evidence type="ECO:0000255" key="1">
    <source>
        <dbReference type="HAMAP-Rule" id="MF_01389"/>
    </source>
</evidence>
<evidence type="ECO:0000256" key="2">
    <source>
        <dbReference type="SAM" id="MobiDB-lite"/>
    </source>
</evidence>
<organism>
    <name type="scientific">Rhodococcus jostii (strain RHA1)</name>
    <dbReference type="NCBI Taxonomy" id="101510"/>
    <lineage>
        <taxon>Bacteria</taxon>
        <taxon>Bacillati</taxon>
        <taxon>Actinomycetota</taxon>
        <taxon>Actinomycetes</taxon>
        <taxon>Mycobacteriales</taxon>
        <taxon>Nocardiaceae</taxon>
        <taxon>Rhodococcus</taxon>
    </lineage>
</organism>
<reference key="1">
    <citation type="journal article" date="2006" name="Proc. Natl. Acad. Sci. U.S.A.">
        <title>The complete genome of Rhodococcus sp. RHA1 provides insights into a catabolic powerhouse.</title>
        <authorList>
            <person name="McLeod M.P."/>
            <person name="Warren R.L."/>
            <person name="Hsiao W.W.L."/>
            <person name="Araki N."/>
            <person name="Myhre M."/>
            <person name="Fernandes C."/>
            <person name="Miyazawa D."/>
            <person name="Wong W."/>
            <person name="Lillquist A.L."/>
            <person name="Wang D."/>
            <person name="Dosanjh M."/>
            <person name="Hara H."/>
            <person name="Petrescu A."/>
            <person name="Morin R.D."/>
            <person name="Yang G."/>
            <person name="Stott J.M."/>
            <person name="Schein J.E."/>
            <person name="Shin H."/>
            <person name="Smailus D."/>
            <person name="Siddiqui A.S."/>
            <person name="Marra M.A."/>
            <person name="Jones S.J.M."/>
            <person name="Holt R."/>
            <person name="Brinkman F.S.L."/>
            <person name="Miyauchi K."/>
            <person name="Fukuda M."/>
            <person name="Davies J.E."/>
            <person name="Mohn W.W."/>
            <person name="Eltis L.D."/>
        </authorList>
    </citation>
    <scope>NUCLEOTIDE SEQUENCE [LARGE SCALE GENOMIC DNA]</scope>
    <source>
        <strain>RHA1</strain>
    </source>
</reference>
<gene>
    <name evidence="1" type="primary">ureG</name>
    <name type="ordered locus">RHA1_ro05682</name>
</gene>
<sequence>MPPHFIDGEPHDHQHDRPRRVRVAGEPVRIGIGGPVGSGKTALVAALCRQLREELSLAVLTNDIYTTEDADFLRRHAVLPDERIAAVQTGGCPHTAIRDDITANLDAIDDLIAANPPLDLILVESGGDNLTATFSSGLIDVQIFVVDVAGGDKVPRKGGPGVTFSDLLVINKTDLAPMVGADLGVMRRDAERVREGRPTALISLTEDPSSGPALEWVREQVRTLADVHQ</sequence>
<feature type="chain" id="PRO_1000145219" description="Urease accessory protein UreG">
    <location>
        <begin position="1"/>
        <end position="229"/>
    </location>
</feature>
<feature type="region of interest" description="Disordered" evidence="2">
    <location>
        <begin position="1"/>
        <end position="20"/>
    </location>
</feature>
<feature type="compositionally biased region" description="Basic and acidic residues" evidence="2">
    <location>
        <begin position="1"/>
        <end position="15"/>
    </location>
</feature>
<feature type="binding site" evidence="1">
    <location>
        <begin position="34"/>
        <end position="41"/>
    </location>
    <ligand>
        <name>GTP</name>
        <dbReference type="ChEBI" id="CHEBI:37565"/>
    </ligand>
</feature>
<accession>Q0S4S5</accession>
<dbReference type="EMBL" id="CP000431">
    <property type="protein sequence ID" value="ABG97461.1"/>
    <property type="molecule type" value="Genomic_DNA"/>
</dbReference>
<dbReference type="RefSeq" id="WP_009478935.1">
    <property type="nucleotide sequence ID" value="NC_008268.1"/>
</dbReference>
<dbReference type="SMR" id="Q0S4S5"/>
<dbReference type="KEGG" id="rha:RHA1_ro05682"/>
<dbReference type="eggNOG" id="COG0378">
    <property type="taxonomic scope" value="Bacteria"/>
</dbReference>
<dbReference type="HOGENOM" id="CLU_072144_1_0_11"/>
<dbReference type="OrthoDB" id="9802035at2"/>
<dbReference type="Proteomes" id="UP000008710">
    <property type="component" value="Chromosome"/>
</dbReference>
<dbReference type="GO" id="GO:0005737">
    <property type="term" value="C:cytoplasm"/>
    <property type="evidence" value="ECO:0007669"/>
    <property type="project" value="UniProtKB-SubCell"/>
</dbReference>
<dbReference type="GO" id="GO:0005525">
    <property type="term" value="F:GTP binding"/>
    <property type="evidence" value="ECO:0007669"/>
    <property type="project" value="UniProtKB-KW"/>
</dbReference>
<dbReference type="GO" id="GO:0003924">
    <property type="term" value="F:GTPase activity"/>
    <property type="evidence" value="ECO:0007669"/>
    <property type="project" value="InterPro"/>
</dbReference>
<dbReference type="GO" id="GO:0016151">
    <property type="term" value="F:nickel cation binding"/>
    <property type="evidence" value="ECO:0007669"/>
    <property type="project" value="UniProtKB-UniRule"/>
</dbReference>
<dbReference type="GO" id="GO:0043419">
    <property type="term" value="P:urea catabolic process"/>
    <property type="evidence" value="ECO:0007669"/>
    <property type="project" value="InterPro"/>
</dbReference>
<dbReference type="CDD" id="cd05540">
    <property type="entry name" value="UreG"/>
    <property type="match status" value="1"/>
</dbReference>
<dbReference type="FunFam" id="3.40.50.300:FF:000208">
    <property type="entry name" value="Urease accessory protein UreG"/>
    <property type="match status" value="1"/>
</dbReference>
<dbReference type="Gene3D" id="3.40.50.300">
    <property type="entry name" value="P-loop containing nucleotide triphosphate hydrolases"/>
    <property type="match status" value="1"/>
</dbReference>
<dbReference type="HAMAP" id="MF_01389">
    <property type="entry name" value="UreG"/>
    <property type="match status" value="1"/>
</dbReference>
<dbReference type="InterPro" id="IPR003495">
    <property type="entry name" value="CobW/HypB/UreG_nucleotide-bd"/>
</dbReference>
<dbReference type="InterPro" id="IPR027417">
    <property type="entry name" value="P-loop_NTPase"/>
</dbReference>
<dbReference type="InterPro" id="IPR004400">
    <property type="entry name" value="UreG"/>
</dbReference>
<dbReference type="NCBIfam" id="TIGR00101">
    <property type="entry name" value="ureG"/>
    <property type="match status" value="1"/>
</dbReference>
<dbReference type="PANTHER" id="PTHR31715">
    <property type="entry name" value="UREASE ACCESSORY PROTEIN G"/>
    <property type="match status" value="1"/>
</dbReference>
<dbReference type="PANTHER" id="PTHR31715:SF0">
    <property type="entry name" value="UREASE ACCESSORY PROTEIN G"/>
    <property type="match status" value="1"/>
</dbReference>
<dbReference type="Pfam" id="PF02492">
    <property type="entry name" value="cobW"/>
    <property type="match status" value="1"/>
</dbReference>
<dbReference type="PIRSF" id="PIRSF005624">
    <property type="entry name" value="Ni-bind_GTPase"/>
    <property type="match status" value="1"/>
</dbReference>
<dbReference type="SUPFAM" id="SSF52540">
    <property type="entry name" value="P-loop containing nucleoside triphosphate hydrolases"/>
    <property type="match status" value="1"/>
</dbReference>